<protein>
    <recommendedName>
        <fullName>Apoptosis-inducing factor 1</fullName>
        <ecNumber>1.-.-.-</ecNumber>
    </recommendedName>
    <alternativeName>
        <fullName>Cercosporin and photosensitizer-detoxification protein 1</fullName>
    </alternativeName>
</protein>
<reference key="1">
    <citation type="journal article" date="1996" name="Yeast">
        <title>Sequencing of a 9.2 kb telomeric fragment from the right arm of Saccharomyces cerevisiae chromosome XIV.</title>
        <authorList>
            <person name="Levesque H."/>
            <person name="Lepingle A."/>
            <person name="Nicaud J.-M."/>
            <person name="Gaillardin C."/>
        </authorList>
    </citation>
    <scope>NUCLEOTIDE SEQUENCE [GENOMIC DNA]</scope>
    <source>
        <strain>ATCC 204508 / S288c</strain>
    </source>
</reference>
<reference key="2">
    <citation type="journal article" date="1997" name="Nature">
        <title>The nucleotide sequence of Saccharomyces cerevisiae chromosome XIV and its evolutionary implications.</title>
        <authorList>
            <person name="Philippsen P."/>
            <person name="Kleine K."/>
            <person name="Poehlmann R."/>
            <person name="Duesterhoeft A."/>
            <person name="Hamberg K."/>
            <person name="Hegemann J.H."/>
            <person name="Obermaier B."/>
            <person name="Urrestarazu L.A."/>
            <person name="Aert R."/>
            <person name="Albermann K."/>
            <person name="Altmann R."/>
            <person name="Andre B."/>
            <person name="Baladron V."/>
            <person name="Ballesta J.P.G."/>
            <person name="Becam A.-M."/>
            <person name="Beinhauer J.D."/>
            <person name="Boskovic J."/>
            <person name="Buitrago M.J."/>
            <person name="Bussereau F."/>
            <person name="Coster F."/>
            <person name="Crouzet M."/>
            <person name="D'Angelo M."/>
            <person name="Dal Pero F."/>
            <person name="De Antoni A."/>
            <person name="del Rey F."/>
            <person name="Doignon F."/>
            <person name="Domdey H."/>
            <person name="Dubois E."/>
            <person name="Fiedler T.A."/>
            <person name="Fleig U."/>
            <person name="Floeth M."/>
            <person name="Fritz C."/>
            <person name="Gaillardin C."/>
            <person name="Garcia-Cantalejo J.M."/>
            <person name="Glansdorff N."/>
            <person name="Goffeau A."/>
            <person name="Gueldener U."/>
            <person name="Herbert C.J."/>
            <person name="Heumann K."/>
            <person name="Heuss-Neitzel D."/>
            <person name="Hilbert H."/>
            <person name="Hinni K."/>
            <person name="Iraqui Houssaini I."/>
            <person name="Jacquet M."/>
            <person name="Jimenez A."/>
            <person name="Jonniaux J.-L."/>
            <person name="Karpfinger-Hartl L."/>
            <person name="Lanfranchi G."/>
            <person name="Lepingle A."/>
            <person name="Levesque H."/>
            <person name="Lyck R."/>
            <person name="Maftahi M."/>
            <person name="Mallet L."/>
            <person name="Maurer C.T.C."/>
            <person name="Messenguy F."/>
            <person name="Mewes H.-W."/>
            <person name="Moestl D."/>
            <person name="Nasr F."/>
            <person name="Nicaud J.-M."/>
            <person name="Niedenthal R.K."/>
            <person name="Pandolfo D."/>
            <person name="Pierard A."/>
            <person name="Piravandi E."/>
            <person name="Planta R.J."/>
            <person name="Pohl T.M."/>
            <person name="Purnelle B."/>
            <person name="Rebischung C."/>
            <person name="Remacha M.A."/>
            <person name="Revuelta J.L."/>
            <person name="Rinke M."/>
            <person name="Saiz J.E."/>
            <person name="Sartorello F."/>
            <person name="Scherens B."/>
            <person name="Sen-Gupta M."/>
            <person name="Soler-Mira A."/>
            <person name="Urbanus J.H.M."/>
            <person name="Valle G."/>
            <person name="Van Dyck L."/>
            <person name="Verhasselt P."/>
            <person name="Vierendeels F."/>
            <person name="Vissers S."/>
            <person name="Voet M."/>
            <person name="Volckaert G."/>
            <person name="Wach A."/>
            <person name="Wambutt R."/>
            <person name="Wedler H."/>
            <person name="Zollner A."/>
            <person name="Hani J."/>
        </authorList>
    </citation>
    <scope>NUCLEOTIDE SEQUENCE [LARGE SCALE GENOMIC DNA]</scope>
    <source>
        <strain>ATCC 204508 / S288c</strain>
    </source>
</reference>
<reference key="3">
    <citation type="journal article" date="2014" name="G3 (Bethesda)">
        <title>The reference genome sequence of Saccharomyces cerevisiae: Then and now.</title>
        <authorList>
            <person name="Engel S.R."/>
            <person name="Dietrich F.S."/>
            <person name="Fisk D.G."/>
            <person name="Binkley G."/>
            <person name="Balakrishnan R."/>
            <person name="Costanzo M.C."/>
            <person name="Dwight S.S."/>
            <person name="Hitz B.C."/>
            <person name="Karra K."/>
            <person name="Nash R.S."/>
            <person name="Weng S."/>
            <person name="Wong E.D."/>
            <person name="Lloyd P."/>
            <person name="Skrzypek M.S."/>
            <person name="Miyasato S.R."/>
            <person name="Simison M."/>
            <person name="Cherry J.M."/>
        </authorList>
    </citation>
    <scope>GENOME REANNOTATION</scope>
    <source>
        <strain>ATCC 204508 / S288c</strain>
    </source>
</reference>
<reference key="4">
    <citation type="journal article" date="2001" name="Curr. Genet.">
        <title>A novel putative reductase (Cpd1p) and the multidrug exporter Snq2p are involved in resistance to cercosporin and other singlet oxygen-generating photosensitizers in Saccharomyces cerevisiae.</title>
        <authorList>
            <person name="Ververidis P."/>
            <person name="Davrazou F."/>
            <person name="Diallinas G."/>
            <person name="Georgakopoulos D."/>
            <person name="Kanellis A.K."/>
            <person name="Panopoulos N."/>
        </authorList>
    </citation>
    <scope>FUNCTION</scope>
</reference>
<reference key="5">
    <citation type="journal article" date="2003" name="Nature">
        <title>Global analysis of protein expression in yeast.</title>
        <authorList>
            <person name="Ghaemmaghami S."/>
            <person name="Huh W.-K."/>
            <person name="Bower K."/>
            <person name="Howson R.W."/>
            <person name="Belle A."/>
            <person name="Dephoure N."/>
            <person name="O'Shea E.K."/>
            <person name="Weissman J.S."/>
        </authorList>
    </citation>
    <scope>LEVEL OF PROTEIN EXPRESSION [LARGE SCALE ANALYSIS]</scope>
</reference>
<reference key="6">
    <citation type="journal article" date="2004" name="J. Cell Biol.">
        <title>An AIF orthologue regulates apoptosis in yeast.</title>
        <authorList>
            <person name="Wissing S."/>
            <person name="Ludovico P."/>
            <person name="Herker E."/>
            <person name="Buettner S."/>
            <person name="Engelhardt S.M."/>
            <person name="Decker T."/>
            <person name="Link A."/>
            <person name="Proksch A."/>
            <person name="Rodrigues F."/>
            <person name="Corte-Real M."/>
            <person name="Froehlich K.-U."/>
            <person name="Manns J."/>
            <person name="Cande C."/>
            <person name="Sigrist S.J."/>
            <person name="Kroemer G."/>
            <person name="Madeo F."/>
        </authorList>
    </citation>
    <scope>FUNCTION</scope>
    <scope>SUBCELLULAR LOCATION</scope>
</reference>
<reference key="7">
    <citation type="journal article" date="2005" name="J. Cell Biol.">
        <title>Physiological regulation of yeast cell death in multicellular colonies is triggered by ammonia.</title>
        <authorList>
            <person name="Vachova L."/>
            <person name="Palkova Z."/>
        </authorList>
    </citation>
    <scope>FUNCTION</scope>
</reference>
<name>AIF1_YEAST</name>
<sequence>MTINTKNIVVVGAGVFGVSVANHLYRELGGTYAIKLVTASNYVYFLPSAVRLTVSKDYTKSILPLKNVLDSGIEVIKDTAASFDDKEVVLGSDRAIKFDILVLATGSKWADPIGSTYTFGDNYKEYFEREASRISDADHILFLGGGFVNCELAGELLFKYLEEIRSGKKRISIIHNSDKLLPDSGLYNDTLRKNVTDYLSKNGITLYLNTVGASLDTSPKRIFLGEGSSKYIDADLIYRGVGISPNVPVNSISDLCDKKGFIQVEKNFRVKAVEAGNVFAIGDVTNFRYHGLVKRDNWVDVLTRNVISSLQEGTEASLVDADCLETGHAPSGVSLGPNAGFGQFPLPLLGTINIPSFLISRAKSKNLFSDKMEPLFKK</sequence>
<comment type="function">
    <text evidence="3 5 6">Putative FAD-dependent oxidoreductase involved in the resistance to cercosporin and other singlet oxygen-generating photosensitizers. Translocates from mitochondria to the nucleus under apoptotic conditions, where it degrades DNA and induces apoptosis.</text>
</comment>
<comment type="cofactor">
    <cofactor evidence="1">
        <name>FAD</name>
        <dbReference type="ChEBI" id="CHEBI:57692"/>
    </cofactor>
</comment>
<comment type="subcellular location">
    <subcellularLocation>
        <location evidence="1">Mitochondrion outer membrane</location>
        <topology evidence="1">Single-pass membrane protein</topology>
    </subcellularLocation>
    <subcellularLocation>
        <location evidence="5">Nucleus</location>
    </subcellularLocation>
    <text>Translocates from mitochondrion to the nucleus upon apoptosis induction.</text>
</comment>
<comment type="miscellaneous">
    <text evidence="4">Present with 1560 molecules/cell in log phase SD medium.</text>
</comment>
<comment type="similarity">
    <text evidence="7">Belongs to the FAD-dependent oxidoreductase family.</text>
</comment>
<accession>P52923</accession>
<accession>D6W1P9</accession>
<dbReference type="EC" id="1.-.-.-"/>
<dbReference type="EMBL" id="X86790">
    <property type="protein sequence ID" value="CAA60487.1"/>
    <property type="molecule type" value="Genomic_DNA"/>
</dbReference>
<dbReference type="EMBL" id="Z71689">
    <property type="protein sequence ID" value="CAA96357.1"/>
    <property type="molecule type" value="Genomic_DNA"/>
</dbReference>
<dbReference type="EMBL" id="BK006947">
    <property type="protein sequence ID" value="DAA10615.1"/>
    <property type="molecule type" value="Genomic_DNA"/>
</dbReference>
<dbReference type="PIR" id="S54056">
    <property type="entry name" value="S54056"/>
</dbReference>
<dbReference type="RefSeq" id="NP_014472.1">
    <property type="nucleotide sequence ID" value="NM_001183251.1"/>
</dbReference>
<dbReference type="SMR" id="P52923"/>
<dbReference type="BioGRID" id="35900">
    <property type="interactions" value="68"/>
</dbReference>
<dbReference type="DIP" id="DIP-4250N"/>
<dbReference type="FunCoup" id="P52923">
    <property type="interactions" value="547"/>
</dbReference>
<dbReference type="IntAct" id="P52923">
    <property type="interactions" value="4"/>
</dbReference>
<dbReference type="STRING" id="4932.YNR074C"/>
<dbReference type="iPTMnet" id="P52923"/>
<dbReference type="PaxDb" id="4932-YNR074C"/>
<dbReference type="PeptideAtlas" id="P52923"/>
<dbReference type="EnsemblFungi" id="YNR074C_mRNA">
    <property type="protein sequence ID" value="YNR074C"/>
    <property type="gene ID" value="YNR074C"/>
</dbReference>
<dbReference type="GeneID" id="855811"/>
<dbReference type="KEGG" id="sce:YNR074C"/>
<dbReference type="AGR" id="SGD:S000005357"/>
<dbReference type="SGD" id="S000005357">
    <property type="gene designation" value="AIF1"/>
</dbReference>
<dbReference type="VEuPathDB" id="FungiDB:YNR074C"/>
<dbReference type="eggNOG" id="KOG1336">
    <property type="taxonomic scope" value="Eukaryota"/>
</dbReference>
<dbReference type="HOGENOM" id="CLU_019845_2_0_1"/>
<dbReference type="InParanoid" id="P52923"/>
<dbReference type="OMA" id="PIPFKQS"/>
<dbReference type="OrthoDB" id="202203at2759"/>
<dbReference type="BioCyc" id="YEAST:G3O-33378-MONOMER"/>
<dbReference type="BioGRID-ORCS" id="855811">
    <property type="hits" value="0 hits in 10 CRISPR screens"/>
</dbReference>
<dbReference type="PRO" id="PR:P52923"/>
<dbReference type="Proteomes" id="UP000002311">
    <property type="component" value="Chromosome XIV"/>
</dbReference>
<dbReference type="RNAct" id="P52923">
    <property type="molecule type" value="protein"/>
</dbReference>
<dbReference type="GO" id="GO:0005737">
    <property type="term" value="C:cytoplasm"/>
    <property type="evidence" value="ECO:0000318"/>
    <property type="project" value="GO_Central"/>
</dbReference>
<dbReference type="GO" id="GO:0005741">
    <property type="term" value="C:mitochondrial outer membrane"/>
    <property type="evidence" value="ECO:0007669"/>
    <property type="project" value="UniProtKB-SubCell"/>
</dbReference>
<dbReference type="GO" id="GO:0005739">
    <property type="term" value="C:mitochondrion"/>
    <property type="evidence" value="ECO:0000314"/>
    <property type="project" value="SGD"/>
</dbReference>
<dbReference type="GO" id="GO:0005634">
    <property type="term" value="C:nucleus"/>
    <property type="evidence" value="ECO:0000314"/>
    <property type="project" value="SGD"/>
</dbReference>
<dbReference type="GO" id="GO:0004174">
    <property type="term" value="F:electron-transferring-flavoprotein dehydrogenase activity"/>
    <property type="evidence" value="ECO:0000318"/>
    <property type="project" value="GO_Central"/>
</dbReference>
<dbReference type="GO" id="GO:0050660">
    <property type="term" value="F:flavin adenine dinucleotide binding"/>
    <property type="evidence" value="ECO:0000318"/>
    <property type="project" value="GO_Central"/>
</dbReference>
<dbReference type="GO" id="GO:0016655">
    <property type="term" value="F:oxidoreductase activity, acting on NAD(P)H, quinone or similar compound as acceptor"/>
    <property type="evidence" value="ECO:0000250"/>
    <property type="project" value="SGD"/>
</dbReference>
<dbReference type="GO" id="GO:0006915">
    <property type="term" value="P:apoptotic process"/>
    <property type="evidence" value="ECO:0007669"/>
    <property type="project" value="UniProtKB-KW"/>
</dbReference>
<dbReference type="GO" id="GO:0043065">
    <property type="term" value="P:positive regulation of apoptotic process"/>
    <property type="evidence" value="ECO:0000315"/>
    <property type="project" value="SGD"/>
</dbReference>
<dbReference type="GO" id="GO:0000304">
    <property type="term" value="P:response to singlet oxygen"/>
    <property type="evidence" value="ECO:0000315"/>
    <property type="project" value="SGD"/>
</dbReference>
<dbReference type="FunFam" id="3.50.50.100:FF:000024">
    <property type="entry name" value="Apoptosis-inducing factor"/>
    <property type="match status" value="1"/>
</dbReference>
<dbReference type="Gene3D" id="3.50.50.100">
    <property type="match status" value="1"/>
</dbReference>
<dbReference type="InterPro" id="IPR036188">
    <property type="entry name" value="FAD/NAD-bd_sf"/>
</dbReference>
<dbReference type="InterPro" id="IPR023753">
    <property type="entry name" value="FAD/NAD-binding_dom"/>
</dbReference>
<dbReference type="PANTHER" id="PTHR43735">
    <property type="entry name" value="APOPTOSIS-INDUCING FACTOR 1"/>
    <property type="match status" value="1"/>
</dbReference>
<dbReference type="PANTHER" id="PTHR43735:SF3">
    <property type="entry name" value="FERROPTOSIS SUPPRESSOR PROTEIN 1"/>
    <property type="match status" value="1"/>
</dbReference>
<dbReference type="Pfam" id="PF07992">
    <property type="entry name" value="Pyr_redox_2"/>
    <property type="match status" value="1"/>
</dbReference>
<dbReference type="PRINTS" id="PR00368">
    <property type="entry name" value="FADPNR"/>
</dbReference>
<dbReference type="SUPFAM" id="SSF51905">
    <property type="entry name" value="FAD/NAD(P)-binding domain"/>
    <property type="match status" value="1"/>
</dbReference>
<feature type="chain" id="PRO_0000203486" description="Apoptosis-inducing factor 1">
    <location>
        <begin position="1"/>
        <end position="378"/>
    </location>
</feature>
<feature type="transmembrane region" description="Helical" evidence="2">
    <location>
        <begin position="7"/>
        <end position="25"/>
    </location>
</feature>
<feature type="binding site" evidence="2">
    <location>
        <begin position="12"/>
        <end position="16"/>
    </location>
    <ligand>
        <name>FAD</name>
        <dbReference type="ChEBI" id="CHEBI:57692"/>
    </ligand>
</feature>
<feature type="binding site" evidence="2">
    <location>
        <position position="51"/>
    </location>
    <ligand>
        <name>FAD</name>
        <dbReference type="ChEBI" id="CHEBI:57692"/>
    </ligand>
</feature>
<feature type="binding site" evidence="2">
    <location>
        <position position="56"/>
    </location>
    <ligand>
        <name>FAD</name>
        <dbReference type="ChEBI" id="CHEBI:57692"/>
    </ligand>
</feature>
<feature type="binding site" evidence="2">
    <location>
        <position position="283"/>
    </location>
    <ligand>
        <name>FAD</name>
        <dbReference type="ChEBI" id="CHEBI:57692"/>
    </ligand>
</feature>
<proteinExistence type="evidence at protein level"/>
<organism>
    <name type="scientific">Saccharomyces cerevisiae (strain ATCC 204508 / S288c)</name>
    <name type="common">Baker's yeast</name>
    <dbReference type="NCBI Taxonomy" id="559292"/>
    <lineage>
        <taxon>Eukaryota</taxon>
        <taxon>Fungi</taxon>
        <taxon>Dikarya</taxon>
        <taxon>Ascomycota</taxon>
        <taxon>Saccharomycotina</taxon>
        <taxon>Saccharomycetes</taxon>
        <taxon>Saccharomycetales</taxon>
        <taxon>Saccharomycetaceae</taxon>
        <taxon>Saccharomyces</taxon>
    </lineage>
</organism>
<keyword id="KW-0053">Apoptosis</keyword>
<keyword id="KW-0274">FAD</keyword>
<keyword id="KW-0285">Flavoprotein</keyword>
<keyword id="KW-0472">Membrane</keyword>
<keyword id="KW-0496">Mitochondrion</keyword>
<keyword id="KW-1000">Mitochondrion outer membrane</keyword>
<keyword id="KW-0539">Nucleus</keyword>
<keyword id="KW-0560">Oxidoreductase</keyword>
<keyword id="KW-1185">Reference proteome</keyword>
<keyword id="KW-0812">Transmembrane</keyword>
<keyword id="KW-1133">Transmembrane helix</keyword>
<gene>
    <name type="primary">AIF1</name>
    <name type="synonym">CPD1</name>
    <name type="ordered locus">YNR074C</name>
    <name type="ORF">N3815</name>
</gene>
<evidence type="ECO:0000250" key="1"/>
<evidence type="ECO:0000255" key="2"/>
<evidence type="ECO:0000269" key="3">
    <source>
    </source>
</evidence>
<evidence type="ECO:0000269" key="4">
    <source>
    </source>
</evidence>
<evidence type="ECO:0000269" key="5">
    <source>
    </source>
</evidence>
<evidence type="ECO:0000269" key="6">
    <source>
    </source>
</evidence>
<evidence type="ECO:0000305" key="7"/>